<keyword id="KW-0997">Cell inner membrane</keyword>
<keyword id="KW-1003">Cell membrane</keyword>
<keyword id="KW-0472">Membrane</keyword>
<keyword id="KW-1185">Reference proteome</keyword>
<keyword id="KW-0812">Transmembrane</keyword>
<keyword id="KW-1133">Transmembrane helix</keyword>
<keyword id="KW-0813">Transport</keyword>
<protein>
    <recommendedName>
        <fullName evidence="2">Multidrug resistance protein MdtC</fullName>
    </recommendedName>
    <alternativeName>
        <fullName evidence="2">Multidrug transporter MdtC</fullName>
    </alternativeName>
</protein>
<organism>
    <name type="scientific">Shigella flexneri</name>
    <dbReference type="NCBI Taxonomy" id="623"/>
    <lineage>
        <taxon>Bacteria</taxon>
        <taxon>Pseudomonadati</taxon>
        <taxon>Pseudomonadota</taxon>
        <taxon>Gammaproteobacteria</taxon>
        <taxon>Enterobacterales</taxon>
        <taxon>Enterobacteriaceae</taxon>
        <taxon>Shigella</taxon>
    </lineage>
</organism>
<feature type="chain" id="PRO_0000161838" description="Multidrug resistance protein MdtC">
    <location>
        <begin position="1"/>
        <end position="1021"/>
    </location>
</feature>
<feature type="topological domain" description="Cytoplasmic" evidence="1">
    <location>
        <begin position="1"/>
        <end position="6"/>
    </location>
</feature>
<feature type="transmembrane region" description="Helical" evidence="2">
    <location>
        <begin position="7"/>
        <end position="29"/>
    </location>
</feature>
<feature type="topological domain" description="Periplasmic" evidence="1">
    <location>
        <begin position="30"/>
        <end position="335"/>
    </location>
</feature>
<feature type="transmembrane region" description="Helical" evidence="2">
    <location>
        <begin position="336"/>
        <end position="353"/>
    </location>
</feature>
<feature type="topological domain" description="Cytoplasmic" evidence="1">
    <location>
        <begin position="354"/>
        <end position="359"/>
    </location>
</feature>
<feature type="transmembrane region" description="Helical" evidence="2">
    <location>
        <begin position="360"/>
        <end position="379"/>
    </location>
</feature>
<feature type="topological domain" description="Periplasmic" evidence="1">
    <location>
        <begin position="380"/>
        <end position="388"/>
    </location>
</feature>
<feature type="transmembrane region" description="Helical" evidence="2">
    <location>
        <begin position="389"/>
        <end position="411"/>
    </location>
</feature>
<feature type="topological domain" description="Cytoplasmic" evidence="1">
    <location>
        <begin position="412"/>
        <end position="430"/>
    </location>
</feature>
<feature type="transmembrane region" description="Helical" evidence="2">
    <location>
        <begin position="431"/>
        <end position="453"/>
    </location>
</feature>
<feature type="topological domain" description="Periplasmic" evidence="1">
    <location>
        <begin position="454"/>
        <end position="467"/>
    </location>
</feature>
<feature type="transmembrane region" description="Helical" evidence="2">
    <location>
        <begin position="468"/>
        <end position="490"/>
    </location>
</feature>
<feature type="topological domain" description="Cytoplasmic" evidence="1">
    <location>
        <begin position="491"/>
        <end position="848"/>
    </location>
</feature>
<feature type="transmembrane region" description="Helical" evidence="2">
    <location>
        <begin position="849"/>
        <end position="871"/>
    </location>
</feature>
<feature type="topological domain" description="Periplasmic" evidence="1">
    <location>
        <begin position="872"/>
        <end position="890"/>
    </location>
</feature>
<feature type="transmembrane region" description="Helical" evidence="2">
    <location>
        <begin position="891"/>
        <end position="913"/>
    </location>
</feature>
<feature type="topological domain" description="Cytoplasmic" evidence="1">
    <location>
        <begin position="914"/>
        <end position="943"/>
    </location>
</feature>
<feature type="transmembrane region" description="Helical" evidence="2">
    <location>
        <begin position="944"/>
        <end position="966"/>
    </location>
</feature>
<feature type="topological domain" description="Periplasmic" evidence="1">
    <location>
        <begin position="967"/>
        <end position="980"/>
    </location>
</feature>
<feature type="transmembrane region" description="Helical" evidence="2">
    <location>
        <begin position="981"/>
        <end position="1003"/>
    </location>
</feature>
<feature type="topological domain" description="Cytoplasmic" evidence="1">
    <location>
        <begin position="1004"/>
        <end position="1021"/>
    </location>
</feature>
<feature type="sequence conflict" description="In Ref. 2; AAP17501." evidence="3" ref="2">
    <original>S</original>
    <variation>N</variation>
    <location>
        <position position="601"/>
    </location>
</feature>
<proteinExistence type="inferred from homology"/>
<gene>
    <name evidence="2" type="primary">mdtC</name>
    <name type="ordered locus">SF2141</name>
    <name type="ordered locus">S2266</name>
</gene>
<evidence type="ECO:0000255" key="1"/>
<evidence type="ECO:0000255" key="2">
    <source>
        <dbReference type="HAMAP-Rule" id="MF_01424"/>
    </source>
</evidence>
<evidence type="ECO:0000305" key="3"/>
<name>MDTC_SHIFL</name>
<accession>Q83KI4</accession>
<accession>Q7UCB2</accession>
<comment type="subunit">
    <text evidence="2">Part of a tripartite efflux system composed of MdtA, MdtB and MdtC. MdtC forms a heteromultimer with MdtB.</text>
</comment>
<comment type="subcellular location">
    <subcellularLocation>
        <location evidence="2">Cell inner membrane</location>
        <topology evidence="2">Multi-pass membrane protein</topology>
    </subcellularLocation>
</comment>
<comment type="similarity">
    <text evidence="2">Belongs to the resistance-nodulation-cell division (RND) (TC 2.A.6) family. MdtC subfamily.</text>
</comment>
<reference key="1">
    <citation type="journal article" date="2002" name="Nucleic Acids Res.">
        <title>Genome sequence of Shigella flexneri 2a: insights into pathogenicity through comparison with genomes of Escherichia coli K12 and O157.</title>
        <authorList>
            <person name="Jin Q."/>
            <person name="Yuan Z."/>
            <person name="Xu J."/>
            <person name="Wang Y."/>
            <person name="Shen Y."/>
            <person name="Lu W."/>
            <person name="Wang J."/>
            <person name="Liu H."/>
            <person name="Yang J."/>
            <person name="Yang F."/>
            <person name="Zhang X."/>
            <person name="Zhang J."/>
            <person name="Yang G."/>
            <person name="Wu H."/>
            <person name="Qu D."/>
            <person name="Dong J."/>
            <person name="Sun L."/>
            <person name="Xue Y."/>
            <person name="Zhao A."/>
            <person name="Gao Y."/>
            <person name="Zhu J."/>
            <person name="Kan B."/>
            <person name="Ding K."/>
            <person name="Chen S."/>
            <person name="Cheng H."/>
            <person name="Yao Z."/>
            <person name="He B."/>
            <person name="Chen R."/>
            <person name="Ma D."/>
            <person name="Qiang B."/>
            <person name="Wen Y."/>
            <person name="Hou Y."/>
            <person name="Yu J."/>
        </authorList>
    </citation>
    <scope>NUCLEOTIDE SEQUENCE [LARGE SCALE GENOMIC DNA]</scope>
    <source>
        <strain>301 / Serotype 2a</strain>
    </source>
</reference>
<reference key="2">
    <citation type="journal article" date="2003" name="Infect. Immun.">
        <title>Complete genome sequence and comparative genomics of Shigella flexneri serotype 2a strain 2457T.</title>
        <authorList>
            <person name="Wei J."/>
            <person name="Goldberg M.B."/>
            <person name="Burland V."/>
            <person name="Venkatesan M.M."/>
            <person name="Deng W."/>
            <person name="Fournier G."/>
            <person name="Mayhew G.F."/>
            <person name="Plunkett G. III"/>
            <person name="Rose D.J."/>
            <person name="Darling A."/>
            <person name="Mau B."/>
            <person name="Perna N.T."/>
            <person name="Payne S.M."/>
            <person name="Runyen-Janecky L.J."/>
            <person name="Zhou S."/>
            <person name="Schwartz D.C."/>
            <person name="Blattner F.R."/>
        </authorList>
    </citation>
    <scope>NUCLEOTIDE SEQUENCE [LARGE SCALE GENOMIC DNA]</scope>
    <source>
        <strain>ATCC 700930 / 2457T / Serotype 2a</strain>
    </source>
</reference>
<dbReference type="EMBL" id="AE005674">
    <property type="protein sequence ID" value="AAN43675.1"/>
    <property type="molecule type" value="Genomic_DNA"/>
</dbReference>
<dbReference type="EMBL" id="AE014073">
    <property type="protein sequence ID" value="AAP17501.1"/>
    <property type="molecule type" value="Genomic_DNA"/>
</dbReference>
<dbReference type="RefSeq" id="WP_000667592.1">
    <property type="nucleotide sequence ID" value="NZ_CP123365.1"/>
</dbReference>
<dbReference type="SMR" id="Q83KI4"/>
<dbReference type="STRING" id="198214.SF2141"/>
<dbReference type="PaxDb" id="198214-SF2141"/>
<dbReference type="KEGG" id="sfl:SF2141"/>
<dbReference type="KEGG" id="sfx:S2266"/>
<dbReference type="PATRIC" id="fig|198214.7.peg.2556"/>
<dbReference type="HOGENOM" id="CLU_002755_1_2_6"/>
<dbReference type="Proteomes" id="UP000001006">
    <property type="component" value="Chromosome"/>
</dbReference>
<dbReference type="Proteomes" id="UP000002673">
    <property type="component" value="Chromosome"/>
</dbReference>
<dbReference type="GO" id="GO:0005886">
    <property type="term" value="C:plasma membrane"/>
    <property type="evidence" value="ECO:0007669"/>
    <property type="project" value="UniProtKB-SubCell"/>
</dbReference>
<dbReference type="GO" id="GO:0042910">
    <property type="term" value="F:xenobiotic transmembrane transporter activity"/>
    <property type="evidence" value="ECO:0007669"/>
    <property type="project" value="TreeGrafter"/>
</dbReference>
<dbReference type="FunFam" id="1.20.1640.10:FF:000001">
    <property type="entry name" value="Efflux pump membrane transporter"/>
    <property type="match status" value="1"/>
</dbReference>
<dbReference type="FunFam" id="3.30.70.1430:FF:000001">
    <property type="entry name" value="Efflux pump membrane transporter"/>
    <property type="match status" value="1"/>
</dbReference>
<dbReference type="FunFam" id="3.30.2090.10:FF:000004">
    <property type="entry name" value="Multidrug resistance protein MdtC"/>
    <property type="match status" value="1"/>
</dbReference>
<dbReference type="FunFam" id="3.30.2090.10:FF:000005">
    <property type="entry name" value="Multidrug resistance protein MdtC"/>
    <property type="match status" value="1"/>
</dbReference>
<dbReference type="FunFam" id="3.30.70.1430:FF:000004">
    <property type="entry name" value="Multidrug resistance protein MdtC"/>
    <property type="match status" value="1"/>
</dbReference>
<dbReference type="Gene3D" id="3.30.70.1430">
    <property type="entry name" value="Multidrug efflux transporter AcrB pore domain"/>
    <property type="match status" value="2"/>
</dbReference>
<dbReference type="Gene3D" id="3.30.70.1440">
    <property type="entry name" value="Multidrug efflux transporter AcrB pore domain"/>
    <property type="match status" value="1"/>
</dbReference>
<dbReference type="Gene3D" id="3.30.70.1320">
    <property type="entry name" value="Multidrug efflux transporter AcrB pore domain like"/>
    <property type="match status" value="1"/>
</dbReference>
<dbReference type="Gene3D" id="3.30.2090.10">
    <property type="entry name" value="Multidrug efflux transporter AcrB TolC docking domain, DN and DC subdomains"/>
    <property type="match status" value="2"/>
</dbReference>
<dbReference type="Gene3D" id="1.20.1640.10">
    <property type="entry name" value="Multidrug efflux transporter AcrB transmembrane domain"/>
    <property type="match status" value="2"/>
</dbReference>
<dbReference type="HAMAP" id="MF_01424">
    <property type="entry name" value="MdtC"/>
    <property type="match status" value="1"/>
</dbReference>
<dbReference type="InterPro" id="IPR027463">
    <property type="entry name" value="AcrB_DN_DC_subdom"/>
</dbReference>
<dbReference type="InterPro" id="IPR001036">
    <property type="entry name" value="Acrflvin-R"/>
</dbReference>
<dbReference type="InterPro" id="IPR023931">
    <property type="entry name" value="Multidrug-R_MdtC"/>
</dbReference>
<dbReference type="NCBIfam" id="NF007905">
    <property type="entry name" value="PRK10614.1"/>
    <property type="match status" value="1"/>
</dbReference>
<dbReference type="NCBIfam" id="NF033617">
    <property type="entry name" value="RND_permease_2"/>
    <property type="match status" value="1"/>
</dbReference>
<dbReference type="PANTHER" id="PTHR32063">
    <property type="match status" value="1"/>
</dbReference>
<dbReference type="PANTHER" id="PTHR32063:SF34">
    <property type="entry name" value="MULTIDRUG RESISTANCE PROTEIN MDTC"/>
    <property type="match status" value="1"/>
</dbReference>
<dbReference type="Pfam" id="PF00873">
    <property type="entry name" value="ACR_tran"/>
    <property type="match status" value="1"/>
</dbReference>
<dbReference type="PRINTS" id="PR00702">
    <property type="entry name" value="ACRIFLAVINRP"/>
</dbReference>
<dbReference type="SUPFAM" id="SSF82693">
    <property type="entry name" value="Multidrug efflux transporter AcrB pore domain, PN1, PN2, PC1 and PC2 subdomains"/>
    <property type="match status" value="4"/>
</dbReference>
<dbReference type="SUPFAM" id="SSF82714">
    <property type="entry name" value="Multidrug efflux transporter AcrB TolC docking domain, DN and DC subdomains"/>
    <property type="match status" value="2"/>
</dbReference>
<dbReference type="SUPFAM" id="SSF82866">
    <property type="entry name" value="Multidrug efflux transporter AcrB transmembrane domain"/>
    <property type="match status" value="2"/>
</dbReference>
<sequence>MKFFALFIYRPVATILLSVAITLCGILGFRMLPVAPLPQVDFPVIMVSASLPGASPETMASSVATPLERSLGRIAGVSEMTSSSSLGSTRIILQFDFDRDINGAARDVQAAINAAQSLLPSGMPSRPTYRKANPSDAPIMILTLTSDTYSQGELYDFASTQLAPTISQIDGVGDVDVGGSSLPAVRVGLTPQALFNQGVSLDDVRTAISNANVRKPQGALEDGTHRWQIQTNDELKTAAEYQPLIIHYNNGGAVRLGDVATVTDSVQDVRNAGMTNAKPAILLMIRKLPEANIIQTVDSIRAKLPELQETIPAAIDLQIAQDRSPTIRASLEEVEQTLIISVALVILVVFLFLRSGRATIIPAVAVPVSLIGTFAAMYLCGFSLNNLSLMALTIATGFVVDDAIVVLENIARHLEAGMKPLQAALQGTREVGFTVLSMSLSLVAVFLPLLLMGGLPGRLLREFAVTLSVAIGISLLVSLTLTPMMCGWMLKASKPREQKRLRGFGRMLVALQQGYGKSLKWVLNHTRLVGVVLLGTIALNISIPKTFFPEQDTGVLMGGIQADQSISFQAMRGKLQDFMKIIRDDPAVDNVTGFTGGSRVSSGMMFITLKPRDERSETAQQIIDRLRVKLAKEPGANLFLMAVQDIRVGGRQSNASYQYTLLSDDLAALREWEPKIRKKLATLPELADVNSDQQDNGAEMNLVYDRDTMARLGIDVQAANSLLNNAFGQRQISTIYQPMNQYKVVMEVDPRYTQDISALEKMFVINNEGKAIPLSYFAKWQPANAPLSVNHQGLSAASTISFNLPTGKSLSDASAAIDRAMTQLGVPSTVRGSFAGTAQVFQETMNSQVILIIAAIATVYIVLGILYESYVHPLTILSTLPSAGVGALLALELFNAPFSLIALIGIMLLIGIVKKNAIMMVDFALEAQRHGNLTPQEAIFQACLLRFRPIMMTTLAALFGALPLVLSGGDGSELRQPLEITIVGGLVMSQLLTLYTTPVVYLFFDRLRLRFSRKPKQTVTE</sequence>